<name>Y475_BUCA5</name>
<accession>B8D9Q9</accession>
<protein>
    <recommendedName>
        <fullName evidence="1">Nucleoid-associated protein BUAP5A_475</fullName>
    </recommendedName>
</protein>
<proteinExistence type="inferred from homology"/>
<comment type="function">
    <text evidence="1">Binds to DNA and alters its conformation. May be involved in regulation of gene expression, nucleoid organization and DNA protection.</text>
</comment>
<comment type="subunit">
    <text evidence="1">Homodimer.</text>
</comment>
<comment type="subcellular location">
    <subcellularLocation>
        <location evidence="1">Cytoplasm</location>
        <location evidence="1">Nucleoid</location>
    </subcellularLocation>
</comment>
<comment type="similarity">
    <text evidence="1">Belongs to the YbaB/EbfC family.</text>
</comment>
<keyword id="KW-0963">Cytoplasm</keyword>
<keyword id="KW-0238">DNA-binding</keyword>
<evidence type="ECO:0000255" key="1">
    <source>
        <dbReference type="HAMAP-Rule" id="MF_00274"/>
    </source>
</evidence>
<organism>
    <name type="scientific">Buchnera aphidicola subsp. Acyrthosiphon pisum (strain 5A)</name>
    <dbReference type="NCBI Taxonomy" id="563178"/>
    <lineage>
        <taxon>Bacteria</taxon>
        <taxon>Pseudomonadati</taxon>
        <taxon>Pseudomonadota</taxon>
        <taxon>Gammaproteobacteria</taxon>
        <taxon>Enterobacterales</taxon>
        <taxon>Erwiniaceae</taxon>
        <taxon>Buchnera</taxon>
    </lineage>
</organism>
<sequence>MFTKGGLGNLMKQAQQMQEKMAKIQEEIAQMEVTGEAGAGLVKVTINGAHNCRRVEVDPSLLQDDKDMLEDLAAAAFNDATRRISEVQKKKMSAISTGMQLPNGFNMPV</sequence>
<feature type="chain" id="PRO_1000197645" description="Nucleoid-associated protein BUAP5A_475">
    <location>
        <begin position="1"/>
        <end position="109"/>
    </location>
</feature>
<dbReference type="EMBL" id="CP001161">
    <property type="protein sequence ID" value="ACL30830.1"/>
    <property type="molecule type" value="Genomic_DNA"/>
</dbReference>
<dbReference type="RefSeq" id="WP_009874435.1">
    <property type="nucleotide sequence ID" value="NC_011833.1"/>
</dbReference>
<dbReference type="SMR" id="B8D9Q9"/>
<dbReference type="KEGG" id="bap:BUAP5A_475"/>
<dbReference type="HOGENOM" id="CLU_140930_0_0_6"/>
<dbReference type="OrthoDB" id="9808738at2"/>
<dbReference type="Proteomes" id="UP000006904">
    <property type="component" value="Chromosome"/>
</dbReference>
<dbReference type="GO" id="GO:0043590">
    <property type="term" value="C:bacterial nucleoid"/>
    <property type="evidence" value="ECO:0007669"/>
    <property type="project" value="UniProtKB-UniRule"/>
</dbReference>
<dbReference type="GO" id="GO:0005829">
    <property type="term" value="C:cytosol"/>
    <property type="evidence" value="ECO:0007669"/>
    <property type="project" value="TreeGrafter"/>
</dbReference>
<dbReference type="GO" id="GO:0003677">
    <property type="term" value="F:DNA binding"/>
    <property type="evidence" value="ECO:0007669"/>
    <property type="project" value="UniProtKB-UniRule"/>
</dbReference>
<dbReference type="FunFam" id="3.30.1310.10:FF:000001">
    <property type="entry name" value="Nucleoid-associated protein YbaB"/>
    <property type="match status" value="1"/>
</dbReference>
<dbReference type="Gene3D" id="3.30.1310.10">
    <property type="entry name" value="Nucleoid-associated protein YbaB-like domain"/>
    <property type="match status" value="1"/>
</dbReference>
<dbReference type="HAMAP" id="MF_00274">
    <property type="entry name" value="DNA_YbaB_EbfC"/>
    <property type="match status" value="1"/>
</dbReference>
<dbReference type="InterPro" id="IPR036894">
    <property type="entry name" value="YbaB-like_sf"/>
</dbReference>
<dbReference type="InterPro" id="IPR004401">
    <property type="entry name" value="YbaB/EbfC"/>
</dbReference>
<dbReference type="NCBIfam" id="TIGR00103">
    <property type="entry name" value="DNA_YbaB_EbfC"/>
    <property type="match status" value="1"/>
</dbReference>
<dbReference type="PANTHER" id="PTHR33449">
    <property type="entry name" value="NUCLEOID-ASSOCIATED PROTEIN YBAB"/>
    <property type="match status" value="1"/>
</dbReference>
<dbReference type="PANTHER" id="PTHR33449:SF1">
    <property type="entry name" value="NUCLEOID-ASSOCIATED PROTEIN YBAB"/>
    <property type="match status" value="1"/>
</dbReference>
<dbReference type="Pfam" id="PF02575">
    <property type="entry name" value="YbaB_DNA_bd"/>
    <property type="match status" value="1"/>
</dbReference>
<dbReference type="PIRSF" id="PIRSF004555">
    <property type="entry name" value="UCP004555"/>
    <property type="match status" value="1"/>
</dbReference>
<dbReference type="SUPFAM" id="SSF82607">
    <property type="entry name" value="YbaB-like"/>
    <property type="match status" value="1"/>
</dbReference>
<gene>
    <name type="ordered locus">BUAP5A_475</name>
</gene>
<reference key="1">
    <citation type="journal article" date="2009" name="Science">
        <title>The dynamics and time scale of ongoing genomic erosion in symbiotic bacteria.</title>
        <authorList>
            <person name="Moran N.A."/>
            <person name="McLaughlin H.J."/>
            <person name="Sorek R."/>
        </authorList>
    </citation>
    <scope>NUCLEOTIDE SEQUENCE [LARGE SCALE GENOMIC DNA]</scope>
    <source>
        <strain>5A</strain>
    </source>
</reference>